<comment type="function">
    <text evidence="1">The glycine cleavage system catalyzes the degradation of glycine. The P protein binds the alpha-amino group of glycine through its pyridoxal phosphate cofactor; CO(2) is released and the remaining methylamine moiety is then transferred to the lipoamide cofactor of the H protein.</text>
</comment>
<comment type="catalytic activity">
    <reaction evidence="1">
        <text>N(6)-[(R)-lipoyl]-L-lysyl-[glycine-cleavage complex H protein] + glycine + H(+) = N(6)-[(R)-S(8)-aminomethyldihydrolipoyl]-L-lysyl-[glycine-cleavage complex H protein] + CO2</text>
        <dbReference type="Rhea" id="RHEA:24304"/>
        <dbReference type="Rhea" id="RHEA-COMP:10494"/>
        <dbReference type="Rhea" id="RHEA-COMP:10495"/>
        <dbReference type="ChEBI" id="CHEBI:15378"/>
        <dbReference type="ChEBI" id="CHEBI:16526"/>
        <dbReference type="ChEBI" id="CHEBI:57305"/>
        <dbReference type="ChEBI" id="CHEBI:83099"/>
        <dbReference type="ChEBI" id="CHEBI:83143"/>
        <dbReference type="EC" id="1.4.4.2"/>
    </reaction>
</comment>
<comment type="cofactor">
    <cofactor evidence="1">
        <name>pyridoxal 5'-phosphate</name>
        <dbReference type="ChEBI" id="CHEBI:597326"/>
    </cofactor>
</comment>
<comment type="subunit">
    <text evidence="1">The glycine cleavage system is composed of four proteins: P, T, L and H. In this organism, the P 'protein' is a heterodimer of two subunits.</text>
</comment>
<comment type="similarity">
    <text evidence="1">Belongs to the GcvP family. C-terminal subunit subfamily.</text>
</comment>
<protein>
    <recommendedName>
        <fullName evidence="1">Probable glycine dehydrogenase (decarboxylating) subunit 2</fullName>
        <ecNumber evidence="1">1.4.4.2</ecNumber>
    </recommendedName>
    <alternativeName>
        <fullName evidence="1">Glycine cleavage system P-protein subunit 2</fullName>
    </alternativeName>
    <alternativeName>
        <fullName evidence="1">Glycine decarboxylase subunit 2</fullName>
    </alternativeName>
    <alternativeName>
        <fullName evidence="1">Glycine dehydrogenase (aminomethyl-transferring) subunit 2</fullName>
    </alternativeName>
</protein>
<name>GCSPB_COXB1</name>
<proteinExistence type="inferred from homology"/>
<evidence type="ECO:0000255" key="1">
    <source>
        <dbReference type="HAMAP-Rule" id="MF_00713"/>
    </source>
</evidence>
<feature type="chain" id="PRO_1000132498" description="Probable glycine dehydrogenase (decarboxylating) subunit 2">
    <location>
        <begin position="1"/>
        <end position="491"/>
    </location>
</feature>
<feature type="modified residue" description="N6-(pyridoxal phosphate)lysine" evidence="1">
    <location>
        <position position="264"/>
    </location>
</feature>
<organism>
    <name type="scientific">Coxiella burnetii (strain CbuK_Q154)</name>
    <name type="common">Coxiella burnetii (strain Q154)</name>
    <dbReference type="NCBI Taxonomy" id="434924"/>
    <lineage>
        <taxon>Bacteria</taxon>
        <taxon>Pseudomonadati</taxon>
        <taxon>Pseudomonadota</taxon>
        <taxon>Gammaproteobacteria</taxon>
        <taxon>Legionellales</taxon>
        <taxon>Coxiellaceae</taxon>
        <taxon>Coxiella</taxon>
    </lineage>
</organism>
<reference key="1">
    <citation type="journal article" date="2009" name="Infect. Immun.">
        <title>Comparative genomics reveal extensive transposon-mediated genomic plasticity and diversity among potential effector proteins within the genus Coxiella.</title>
        <authorList>
            <person name="Beare P.A."/>
            <person name="Unsworth N."/>
            <person name="Andoh M."/>
            <person name="Voth D.E."/>
            <person name="Omsland A."/>
            <person name="Gilk S.D."/>
            <person name="Williams K.P."/>
            <person name="Sobral B.W."/>
            <person name="Kupko J.J. III"/>
            <person name="Porcella S.F."/>
            <person name="Samuel J.E."/>
            <person name="Heinzen R.A."/>
        </authorList>
    </citation>
    <scope>NUCLEOTIDE SEQUENCE [LARGE SCALE GENOMIC DNA]</scope>
    <source>
        <strain>CbuK_Q154</strain>
    </source>
</reference>
<accession>B6J4T8</accession>
<gene>
    <name evidence="1" type="primary">gcvPB</name>
    <name type="ordered locus">CbuK_0295</name>
</gene>
<keyword id="KW-0560">Oxidoreductase</keyword>
<keyword id="KW-0663">Pyridoxal phosphate</keyword>
<dbReference type="EC" id="1.4.4.2" evidence="1"/>
<dbReference type="EMBL" id="CP001020">
    <property type="protein sequence ID" value="ACJ19603.1"/>
    <property type="molecule type" value="Genomic_DNA"/>
</dbReference>
<dbReference type="RefSeq" id="WP_005770513.1">
    <property type="nucleotide sequence ID" value="NC_011528.1"/>
</dbReference>
<dbReference type="SMR" id="B6J4T8"/>
<dbReference type="KEGG" id="cbc:CbuK_0295"/>
<dbReference type="HOGENOM" id="CLU_004620_5_0_6"/>
<dbReference type="GO" id="GO:0005829">
    <property type="term" value="C:cytosol"/>
    <property type="evidence" value="ECO:0007669"/>
    <property type="project" value="TreeGrafter"/>
</dbReference>
<dbReference type="GO" id="GO:0005960">
    <property type="term" value="C:glycine cleavage complex"/>
    <property type="evidence" value="ECO:0007669"/>
    <property type="project" value="TreeGrafter"/>
</dbReference>
<dbReference type="GO" id="GO:0016594">
    <property type="term" value="F:glycine binding"/>
    <property type="evidence" value="ECO:0007669"/>
    <property type="project" value="TreeGrafter"/>
</dbReference>
<dbReference type="GO" id="GO:0004375">
    <property type="term" value="F:glycine dehydrogenase (decarboxylating) activity"/>
    <property type="evidence" value="ECO:0007669"/>
    <property type="project" value="UniProtKB-EC"/>
</dbReference>
<dbReference type="GO" id="GO:0030170">
    <property type="term" value="F:pyridoxal phosphate binding"/>
    <property type="evidence" value="ECO:0007669"/>
    <property type="project" value="TreeGrafter"/>
</dbReference>
<dbReference type="GO" id="GO:0019464">
    <property type="term" value="P:glycine decarboxylation via glycine cleavage system"/>
    <property type="evidence" value="ECO:0007669"/>
    <property type="project" value="UniProtKB-UniRule"/>
</dbReference>
<dbReference type="CDD" id="cd00613">
    <property type="entry name" value="GDC-P"/>
    <property type="match status" value="1"/>
</dbReference>
<dbReference type="FunFam" id="3.40.640.10:FF:000034">
    <property type="entry name" value="Probable glycine dehydrogenase (decarboxylating) subunit 2"/>
    <property type="match status" value="1"/>
</dbReference>
<dbReference type="FunFam" id="3.90.1150.10:FF:000014">
    <property type="entry name" value="Probable glycine dehydrogenase (decarboxylating) subunit 2"/>
    <property type="match status" value="1"/>
</dbReference>
<dbReference type="Gene3D" id="6.20.440.10">
    <property type="match status" value="1"/>
</dbReference>
<dbReference type="Gene3D" id="3.90.1150.10">
    <property type="entry name" value="Aspartate Aminotransferase, domain 1"/>
    <property type="match status" value="1"/>
</dbReference>
<dbReference type="Gene3D" id="3.40.640.10">
    <property type="entry name" value="Type I PLP-dependent aspartate aminotransferase-like (Major domain)"/>
    <property type="match status" value="1"/>
</dbReference>
<dbReference type="HAMAP" id="MF_00713">
    <property type="entry name" value="GcvPB"/>
    <property type="match status" value="1"/>
</dbReference>
<dbReference type="InterPro" id="IPR023012">
    <property type="entry name" value="GcvPB"/>
</dbReference>
<dbReference type="InterPro" id="IPR049316">
    <property type="entry name" value="GDC-P_C"/>
</dbReference>
<dbReference type="InterPro" id="IPR049315">
    <property type="entry name" value="GDC-P_N"/>
</dbReference>
<dbReference type="InterPro" id="IPR020581">
    <property type="entry name" value="GDC_P"/>
</dbReference>
<dbReference type="InterPro" id="IPR015424">
    <property type="entry name" value="PyrdxlP-dep_Trfase"/>
</dbReference>
<dbReference type="InterPro" id="IPR015421">
    <property type="entry name" value="PyrdxlP-dep_Trfase_major"/>
</dbReference>
<dbReference type="InterPro" id="IPR015422">
    <property type="entry name" value="PyrdxlP-dep_Trfase_small"/>
</dbReference>
<dbReference type="NCBIfam" id="NF003346">
    <property type="entry name" value="PRK04366.1"/>
    <property type="match status" value="1"/>
</dbReference>
<dbReference type="PANTHER" id="PTHR11773:SF1">
    <property type="entry name" value="GLYCINE DEHYDROGENASE (DECARBOXYLATING), MITOCHONDRIAL"/>
    <property type="match status" value="1"/>
</dbReference>
<dbReference type="PANTHER" id="PTHR11773">
    <property type="entry name" value="GLYCINE DEHYDROGENASE, DECARBOXYLATING"/>
    <property type="match status" value="1"/>
</dbReference>
<dbReference type="Pfam" id="PF21478">
    <property type="entry name" value="GcvP2_C"/>
    <property type="match status" value="1"/>
</dbReference>
<dbReference type="Pfam" id="PF02347">
    <property type="entry name" value="GDC-P"/>
    <property type="match status" value="1"/>
</dbReference>
<dbReference type="SUPFAM" id="SSF53383">
    <property type="entry name" value="PLP-dependent transferases"/>
    <property type="match status" value="1"/>
</dbReference>
<sequence length="491" mass="54647">MLIFEKSRKNRRTLAHAIADKMDANDIPANLLRHDAPRLPELSELEVVRHFTRLSTQNFSIDTHFYPLGSCTMKYNPRAANRLASLPGYLKRHPLSPAPQSQAFLQCLYELQTMLTEITGMEKISLTSMAGAQGEFAGVAMIKAYHESRGDYDRTEMIVPDAAHGTNPASAAMCGFTVKEISTTKDGDIDLEKLRQMVGAKTAGIMLTNPSTLGVFERQISEVAKIIHNAGGLLYYDGANLNAILGKYRPGDMGFDVMHLNLHKTFATPHGGGGPGAGPVAAGPRLSKFLPVPMVGKNKEGYDWLTEKECPKSIGRLSAFMGNSGVLLRAYIYLRLLGKEGLSRVAEFSTLNANYLMKRLEQLGFTLAFPNRRASHEFIITLKPLTRAYGVTALDIAKRLLDYGFHAPTIYFPLLVPECLLIEPTETESKQTLDHFIEAMEKILTEIKTTPDLLRNAPHQQLINRLDEVKAARELDLRWYPIAKETEIFIQ</sequence>